<proteinExistence type="inferred from homology"/>
<organism>
    <name type="scientific">Rhodospirillum rubrum (strain ATCC 11170 / ATH 1.1.1 / DSM 467 / LMG 4362 / NCIMB 8255 / S1)</name>
    <dbReference type="NCBI Taxonomy" id="269796"/>
    <lineage>
        <taxon>Bacteria</taxon>
        <taxon>Pseudomonadati</taxon>
        <taxon>Pseudomonadota</taxon>
        <taxon>Alphaproteobacteria</taxon>
        <taxon>Rhodospirillales</taxon>
        <taxon>Rhodospirillaceae</taxon>
        <taxon>Rhodospirillum</taxon>
    </lineage>
</organism>
<dbReference type="EMBL" id="CP000230">
    <property type="protein sequence ID" value="ABC23488.1"/>
    <property type="molecule type" value="Genomic_DNA"/>
</dbReference>
<dbReference type="RefSeq" id="WP_011390501.1">
    <property type="nucleotide sequence ID" value="NC_007643.1"/>
</dbReference>
<dbReference type="RefSeq" id="YP_427775.1">
    <property type="nucleotide sequence ID" value="NC_007643.1"/>
</dbReference>
<dbReference type="SMR" id="Q2RQV7"/>
<dbReference type="STRING" id="269796.Rru_A2691"/>
<dbReference type="EnsemblBacteria" id="ABC23488">
    <property type="protein sequence ID" value="ABC23488"/>
    <property type="gene ID" value="Rru_A2691"/>
</dbReference>
<dbReference type="KEGG" id="rru:Rru_A2691"/>
<dbReference type="PATRIC" id="fig|269796.9.peg.2798"/>
<dbReference type="eggNOG" id="COG0480">
    <property type="taxonomic scope" value="Bacteria"/>
</dbReference>
<dbReference type="HOGENOM" id="CLU_002794_4_1_5"/>
<dbReference type="PhylomeDB" id="Q2RQV7"/>
<dbReference type="Proteomes" id="UP000001929">
    <property type="component" value="Chromosome"/>
</dbReference>
<dbReference type="GO" id="GO:0005737">
    <property type="term" value="C:cytoplasm"/>
    <property type="evidence" value="ECO:0007669"/>
    <property type="project" value="UniProtKB-SubCell"/>
</dbReference>
<dbReference type="GO" id="GO:0005525">
    <property type="term" value="F:GTP binding"/>
    <property type="evidence" value="ECO:0007669"/>
    <property type="project" value="UniProtKB-UniRule"/>
</dbReference>
<dbReference type="GO" id="GO:0003924">
    <property type="term" value="F:GTPase activity"/>
    <property type="evidence" value="ECO:0007669"/>
    <property type="project" value="InterPro"/>
</dbReference>
<dbReference type="GO" id="GO:0003746">
    <property type="term" value="F:translation elongation factor activity"/>
    <property type="evidence" value="ECO:0007669"/>
    <property type="project" value="UniProtKB-UniRule"/>
</dbReference>
<dbReference type="GO" id="GO:0032790">
    <property type="term" value="P:ribosome disassembly"/>
    <property type="evidence" value="ECO:0007669"/>
    <property type="project" value="TreeGrafter"/>
</dbReference>
<dbReference type="CDD" id="cd01886">
    <property type="entry name" value="EF-G"/>
    <property type="match status" value="1"/>
</dbReference>
<dbReference type="CDD" id="cd16262">
    <property type="entry name" value="EFG_III"/>
    <property type="match status" value="1"/>
</dbReference>
<dbReference type="CDD" id="cd01434">
    <property type="entry name" value="EFG_mtEFG1_IV"/>
    <property type="match status" value="1"/>
</dbReference>
<dbReference type="CDD" id="cd03713">
    <property type="entry name" value="EFG_mtEFG_C"/>
    <property type="match status" value="1"/>
</dbReference>
<dbReference type="CDD" id="cd04088">
    <property type="entry name" value="EFG_mtEFG_II"/>
    <property type="match status" value="1"/>
</dbReference>
<dbReference type="FunFam" id="2.40.30.10:FF:000006">
    <property type="entry name" value="Elongation factor G"/>
    <property type="match status" value="1"/>
</dbReference>
<dbReference type="FunFam" id="3.30.230.10:FF:000003">
    <property type="entry name" value="Elongation factor G"/>
    <property type="match status" value="1"/>
</dbReference>
<dbReference type="FunFam" id="3.30.70.240:FF:000001">
    <property type="entry name" value="Elongation factor G"/>
    <property type="match status" value="1"/>
</dbReference>
<dbReference type="FunFam" id="3.30.70.870:FF:000001">
    <property type="entry name" value="Elongation factor G"/>
    <property type="match status" value="1"/>
</dbReference>
<dbReference type="FunFam" id="3.40.50.300:FF:000029">
    <property type="entry name" value="Elongation factor G"/>
    <property type="match status" value="1"/>
</dbReference>
<dbReference type="Gene3D" id="3.30.230.10">
    <property type="match status" value="1"/>
</dbReference>
<dbReference type="Gene3D" id="3.30.70.240">
    <property type="match status" value="1"/>
</dbReference>
<dbReference type="Gene3D" id="3.30.70.870">
    <property type="entry name" value="Elongation Factor G (Translational Gtpase), domain 3"/>
    <property type="match status" value="1"/>
</dbReference>
<dbReference type="Gene3D" id="3.40.50.300">
    <property type="entry name" value="P-loop containing nucleotide triphosphate hydrolases"/>
    <property type="match status" value="1"/>
</dbReference>
<dbReference type="Gene3D" id="2.40.30.10">
    <property type="entry name" value="Translation factors"/>
    <property type="match status" value="1"/>
</dbReference>
<dbReference type="HAMAP" id="MF_00054_B">
    <property type="entry name" value="EF_G_EF_2_B"/>
    <property type="match status" value="1"/>
</dbReference>
<dbReference type="InterPro" id="IPR053905">
    <property type="entry name" value="EF-G-like_DII"/>
</dbReference>
<dbReference type="InterPro" id="IPR041095">
    <property type="entry name" value="EFG_II"/>
</dbReference>
<dbReference type="InterPro" id="IPR009022">
    <property type="entry name" value="EFG_III"/>
</dbReference>
<dbReference type="InterPro" id="IPR035647">
    <property type="entry name" value="EFG_III/V"/>
</dbReference>
<dbReference type="InterPro" id="IPR047872">
    <property type="entry name" value="EFG_IV"/>
</dbReference>
<dbReference type="InterPro" id="IPR035649">
    <property type="entry name" value="EFG_V"/>
</dbReference>
<dbReference type="InterPro" id="IPR000640">
    <property type="entry name" value="EFG_V-like"/>
</dbReference>
<dbReference type="InterPro" id="IPR031157">
    <property type="entry name" value="G_TR_CS"/>
</dbReference>
<dbReference type="InterPro" id="IPR027417">
    <property type="entry name" value="P-loop_NTPase"/>
</dbReference>
<dbReference type="InterPro" id="IPR020568">
    <property type="entry name" value="Ribosomal_Su5_D2-typ_SF"/>
</dbReference>
<dbReference type="InterPro" id="IPR014721">
    <property type="entry name" value="Ribsml_uS5_D2-typ_fold_subgr"/>
</dbReference>
<dbReference type="InterPro" id="IPR005225">
    <property type="entry name" value="Small_GTP-bd"/>
</dbReference>
<dbReference type="InterPro" id="IPR000795">
    <property type="entry name" value="T_Tr_GTP-bd_dom"/>
</dbReference>
<dbReference type="InterPro" id="IPR009000">
    <property type="entry name" value="Transl_B-barrel_sf"/>
</dbReference>
<dbReference type="InterPro" id="IPR004540">
    <property type="entry name" value="Transl_elong_EFG/EF2"/>
</dbReference>
<dbReference type="InterPro" id="IPR005517">
    <property type="entry name" value="Transl_elong_EFG/EF2_IV"/>
</dbReference>
<dbReference type="NCBIfam" id="TIGR00484">
    <property type="entry name" value="EF-G"/>
    <property type="match status" value="1"/>
</dbReference>
<dbReference type="NCBIfam" id="NF009379">
    <property type="entry name" value="PRK12740.1-3"/>
    <property type="match status" value="1"/>
</dbReference>
<dbReference type="NCBIfam" id="NF009381">
    <property type="entry name" value="PRK12740.1-5"/>
    <property type="match status" value="1"/>
</dbReference>
<dbReference type="NCBIfam" id="TIGR00231">
    <property type="entry name" value="small_GTP"/>
    <property type="match status" value="1"/>
</dbReference>
<dbReference type="PANTHER" id="PTHR43261:SF1">
    <property type="entry name" value="RIBOSOME-RELEASING FACTOR 2, MITOCHONDRIAL"/>
    <property type="match status" value="1"/>
</dbReference>
<dbReference type="PANTHER" id="PTHR43261">
    <property type="entry name" value="TRANSLATION ELONGATION FACTOR G-RELATED"/>
    <property type="match status" value="1"/>
</dbReference>
<dbReference type="Pfam" id="PF22042">
    <property type="entry name" value="EF-G_D2"/>
    <property type="match status" value="1"/>
</dbReference>
<dbReference type="Pfam" id="PF00679">
    <property type="entry name" value="EFG_C"/>
    <property type="match status" value="1"/>
</dbReference>
<dbReference type="Pfam" id="PF14492">
    <property type="entry name" value="EFG_III"/>
    <property type="match status" value="1"/>
</dbReference>
<dbReference type="Pfam" id="PF03764">
    <property type="entry name" value="EFG_IV"/>
    <property type="match status" value="1"/>
</dbReference>
<dbReference type="Pfam" id="PF00009">
    <property type="entry name" value="GTP_EFTU"/>
    <property type="match status" value="1"/>
</dbReference>
<dbReference type="PRINTS" id="PR00315">
    <property type="entry name" value="ELONGATNFCT"/>
</dbReference>
<dbReference type="SMART" id="SM00838">
    <property type="entry name" value="EFG_C"/>
    <property type="match status" value="1"/>
</dbReference>
<dbReference type="SMART" id="SM00889">
    <property type="entry name" value="EFG_IV"/>
    <property type="match status" value="1"/>
</dbReference>
<dbReference type="SUPFAM" id="SSF54980">
    <property type="entry name" value="EF-G C-terminal domain-like"/>
    <property type="match status" value="2"/>
</dbReference>
<dbReference type="SUPFAM" id="SSF52540">
    <property type="entry name" value="P-loop containing nucleoside triphosphate hydrolases"/>
    <property type="match status" value="1"/>
</dbReference>
<dbReference type="SUPFAM" id="SSF54211">
    <property type="entry name" value="Ribosomal protein S5 domain 2-like"/>
    <property type="match status" value="1"/>
</dbReference>
<dbReference type="SUPFAM" id="SSF50447">
    <property type="entry name" value="Translation proteins"/>
    <property type="match status" value="1"/>
</dbReference>
<dbReference type="PROSITE" id="PS00301">
    <property type="entry name" value="G_TR_1"/>
    <property type="match status" value="1"/>
</dbReference>
<dbReference type="PROSITE" id="PS51722">
    <property type="entry name" value="G_TR_2"/>
    <property type="match status" value="1"/>
</dbReference>
<name>EFG_RHORT</name>
<keyword id="KW-0963">Cytoplasm</keyword>
<keyword id="KW-0251">Elongation factor</keyword>
<keyword id="KW-0342">GTP-binding</keyword>
<keyword id="KW-0547">Nucleotide-binding</keyword>
<keyword id="KW-0648">Protein biosynthesis</keyword>
<keyword id="KW-1185">Reference proteome</keyword>
<accession>Q2RQV7</accession>
<gene>
    <name evidence="1" type="primary">fusA</name>
    <name type="ordered locus">Rru_A2691</name>
</gene>
<protein>
    <recommendedName>
        <fullName evidence="1">Elongation factor G</fullName>
        <shortName evidence="1">EF-G</shortName>
    </recommendedName>
</protein>
<evidence type="ECO:0000255" key="1">
    <source>
        <dbReference type="HAMAP-Rule" id="MF_00054"/>
    </source>
</evidence>
<comment type="function">
    <text evidence="1">Catalyzes the GTP-dependent ribosomal translocation step during translation elongation. During this step, the ribosome changes from the pre-translocational (PRE) to the post-translocational (POST) state as the newly formed A-site-bound peptidyl-tRNA and P-site-bound deacylated tRNA move to the P and E sites, respectively. Catalyzes the coordinated movement of the two tRNA molecules, the mRNA and conformational changes in the ribosome.</text>
</comment>
<comment type="subcellular location">
    <subcellularLocation>
        <location evidence="1">Cytoplasm</location>
    </subcellularLocation>
</comment>
<comment type="similarity">
    <text evidence="1">Belongs to the TRAFAC class translation factor GTPase superfamily. Classic translation factor GTPase family. EF-G/EF-2 subfamily.</text>
</comment>
<feature type="chain" id="PRO_0000263496" description="Elongation factor G">
    <location>
        <begin position="1"/>
        <end position="692"/>
    </location>
</feature>
<feature type="domain" description="tr-type G">
    <location>
        <begin position="8"/>
        <end position="283"/>
    </location>
</feature>
<feature type="binding site" evidence="1">
    <location>
        <begin position="17"/>
        <end position="24"/>
    </location>
    <ligand>
        <name>GTP</name>
        <dbReference type="ChEBI" id="CHEBI:37565"/>
    </ligand>
</feature>
<feature type="binding site" evidence="1">
    <location>
        <begin position="81"/>
        <end position="85"/>
    </location>
    <ligand>
        <name>GTP</name>
        <dbReference type="ChEBI" id="CHEBI:37565"/>
    </ligand>
</feature>
<feature type="binding site" evidence="1">
    <location>
        <begin position="135"/>
        <end position="138"/>
    </location>
    <ligand>
        <name>GTP</name>
        <dbReference type="ChEBI" id="CHEBI:37565"/>
    </ligand>
</feature>
<reference key="1">
    <citation type="journal article" date="2011" name="Stand. Genomic Sci.">
        <title>Complete genome sequence of Rhodospirillum rubrum type strain (S1).</title>
        <authorList>
            <person name="Munk A.C."/>
            <person name="Copeland A."/>
            <person name="Lucas S."/>
            <person name="Lapidus A."/>
            <person name="Del Rio T.G."/>
            <person name="Barry K."/>
            <person name="Detter J.C."/>
            <person name="Hammon N."/>
            <person name="Israni S."/>
            <person name="Pitluck S."/>
            <person name="Brettin T."/>
            <person name="Bruce D."/>
            <person name="Han C."/>
            <person name="Tapia R."/>
            <person name="Gilna P."/>
            <person name="Schmutz J."/>
            <person name="Larimer F."/>
            <person name="Land M."/>
            <person name="Kyrpides N.C."/>
            <person name="Mavromatis K."/>
            <person name="Richardson P."/>
            <person name="Rohde M."/>
            <person name="Goeker M."/>
            <person name="Klenk H.P."/>
            <person name="Zhang Y."/>
            <person name="Roberts G.P."/>
            <person name="Reslewic S."/>
            <person name="Schwartz D.C."/>
        </authorList>
    </citation>
    <scope>NUCLEOTIDE SEQUENCE [LARGE SCALE GENOMIC DNA]</scope>
    <source>
        <strain>ATCC 11170 / ATH 1.1.1 / DSM 467 / LMG 4362 / NCIMB 8255 / S1</strain>
    </source>
</reference>
<sequence>MKRETPLDRYRNIGIMAHIDAGKTTTTERILCYTGKSHKIGEVHDGAATMDWMEQEQERGITITSAATTAFWRENRVNIIDTPGHVDFTIEVERSLRVLDGAIAVFDSVAGVEPQSETVWRQADKYKVPRMCFVNKMDRIGADFYRCVDMIIDRLGAVPLVINLPIGSESDYAGVIDLIKMKAVIWHSEDLGAHFDYVDIPAEYAEKAAEYREKLLETAVEMDDAAMEAYLEGVEPDEETLKKCIRKGTIAMKFVPVLNGSSFKNKGVQPMLDAVVDFLPSPLDVPAIHGLIPETHEDVIRGCSDDEPFSALAFKIMNDPFVGSLTFARVYSGTVESGSYVQNTVKDKRERIGRMLLMHANNREEIKWAGAGDIVAIVGLKDTTTGDTLSDTIKPVILERMEFPEPVIEVAVEPKTKADVEKMGMALARLAAEDPSFRVASDSESGQTVIKGMGELHLEILVDRMKREFKVECSVGAPQVAYRETISKVFTVDYVHKKQSGGSGQFAKVSITFSPLPPGSGYQFESKIVGGSVPKEYIPGVEKGLKSAIDTGVIAGFPVTDMKASLIDGGYHDVDSSVLAFEIAARAAFREGLPKAGPKLLEPIMKVEVVTPEDYMGDVIGDLNSRRGNILGMDQRGNARVIGAMVPLANMFGYVNTLRSMSQGRAQYTMHFDHYSEVPNNVSEEIRAKMAG</sequence>